<sequence length="438" mass="49244">MSHEEDLIDYSDEEIQPTEVPANGDAAAAKGGLAAPDASGEKKGSYVGIHSTGFRDFLLKDELVRAITDCGFEHPSEVQQVTIPQAILGNDVLCQAKSGLGKTAVFVLATLQQMDEKPEPGVASILVMCHTRELAYQIRNEYNRFAKFLPDVKVGVFYGGTPVAKDIELLSNKDTHPHIIVGTPGRINALVRDRHLRLANLKHFVLDECDKMLDQPDMRNDVQAIFRATPAHKQVMMFSATLSKEIRAVCKKFMQNPLEIYVDDEKKLTLHGLQQFYVKLDEREKNRKLNDLLDNLEFNQVIIFVRSTLRCTELDKLLRECNFPSTAVHSGIGQEERIKRYKEFKEFQTRICVSTDIFGRGIDVERINVAINYDMPDKADAYLHRVGRAGRFGTKGLSISFVSSQDDEAVLKAIEERFAAEIPEFPEDGISSASYMDN</sequence>
<accession>Q0TXZ2</accession>
<organism>
    <name type="scientific">Phaeosphaeria nodorum (strain SN15 / ATCC MYA-4574 / FGSC 10173)</name>
    <name type="common">Glume blotch fungus</name>
    <name type="synonym">Parastagonospora nodorum</name>
    <dbReference type="NCBI Taxonomy" id="321614"/>
    <lineage>
        <taxon>Eukaryota</taxon>
        <taxon>Fungi</taxon>
        <taxon>Dikarya</taxon>
        <taxon>Ascomycota</taxon>
        <taxon>Pezizomycotina</taxon>
        <taxon>Dothideomycetes</taxon>
        <taxon>Pleosporomycetidae</taxon>
        <taxon>Pleosporales</taxon>
        <taxon>Pleosporineae</taxon>
        <taxon>Phaeosphaeriaceae</taxon>
        <taxon>Parastagonospora</taxon>
    </lineage>
</organism>
<evidence type="ECO:0000250" key="1"/>
<evidence type="ECO:0000255" key="2">
    <source>
        <dbReference type="PROSITE-ProRule" id="PRU00541"/>
    </source>
</evidence>
<evidence type="ECO:0000255" key="3">
    <source>
        <dbReference type="PROSITE-ProRule" id="PRU00542"/>
    </source>
</evidence>
<evidence type="ECO:0000256" key="4">
    <source>
        <dbReference type="SAM" id="MobiDB-lite"/>
    </source>
</evidence>
<evidence type="ECO:0000305" key="5"/>
<dbReference type="EC" id="3.6.4.13"/>
<dbReference type="EMBL" id="CH445363">
    <property type="protein sequence ID" value="EAT76998.1"/>
    <property type="molecule type" value="Genomic_DNA"/>
</dbReference>
<dbReference type="RefSeq" id="XP_001805767.1">
    <property type="nucleotide sequence ID" value="XM_001805715.1"/>
</dbReference>
<dbReference type="SMR" id="Q0TXZ2"/>
<dbReference type="FunCoup" id="Q0TXZ2">
    <property type="interactions" value="1149"/>
</dbReference>
<dbReference type="STRING" id="321614.Q0TXZ2"/>
<dbReference type="EnsemblFungi" id="SNOT_15623">
    <property type="protein sequence ID" value="SNOT_15623"/>
    <property type="gene ID" value="SNOG_15623"/>
</dbReference>
<dbReference type="GeneID" id="5982697"/>
<dbReference type="KEGG" id="pno:SNOG_15623"/>
<dbReference type="VEuPathDB" id="FungiDB:JI435_156230"/>
<dbReference type="eggNOG" id="KOG0329">
    <property type="taxonomic scope" value="Eukaryota"/>
</dbReference>
<dbReference type="HOGENOM" id="CLU_003041_1_0_1"/>
<dbReference type="InParanoid" id="Q0TXZ2"/>
<dbReference type="OMA" id="YAHVEPK"/>
<dbReference type="OrthoDB" id="10265785at2759"/>
<dbReference type="Proteomes" id="UP000001055">
    <property type="component" value="Unassembled WGS sequence"/>
</dbReference>
<dbReference type="GO" id="GO:0000781">
    <property type="term" value="C:chromosome, telomeric region"/>
    <property type="evidence" value="ECO:0007669"/>
    <property type="project" value="EnsemblFungi"/>
</dbReference>
<dbReference type="GO" id="GO:0005681">
    <property type="term" value="C:spliceosomal complex"/>
    <property type="evidence" value="ECO:0007669"/>
    <property type="project" value="UniProtKB-KW"/>
</dbReference>
<dbReference type="GO" id="GO:0000346">
    <property type="term" value="C:transcription export complex"/>
    <property type="evidence" value="ECO:0007669"/>
    <property type="project" value="EnsemblFungi"/>
</dbReference>
<dbReference type="GO" id="GO:0005524">
    <property type="term" value="F:ATP binding"/>
    <property type="evidence" value="ECO:0007669"/>
    <property type="project" value="UniProtKB-KW"/>
</dbReference>
<dbReference type="GO" id="GO:0016887">
    <property type="term" value="F:ATP hydrolysis activity"/>
    <property type="evidence" value="ECO:0007669"/>
    <property type="project" value="RHEA"/>
</dbReference>
<dbReference type="GO" id="GO:0003729">
    <property type="term" value="F:mRNA binding"/>
    <property type="evidence" value="ECO:0000318"/>
    <property type="project" value="GO_Central"/>
</dbReference>
<dbReference type="GO" id="GO:0003724">
    <property type="term" value="F:RNA helicase activity"/>
    <property type="evidence" value="ECO:0000318"/>
    <property type="project" value="GO_Central"/>
</dbReference>
<dbReference type="GO" id="GO:0031124">
    <property type="term" value="P:mRNA 3'-end processing"/>
    <property type="evidence" value="ECO:0007669"/>
    <property type="project" value="EnsemblFungi"/>
</dbReference>
<dbReference type="GO" id="GO:0006406">
    <property type="term" value="P:mRNA export from nucleus"/>
    <property type="evidence" value="ECO:0000318"/>
    <property type="project" value="GO_Central"/>
</dbReference>
<dbReference type="GO" id="GO:0000398">
    <property type="term" value="P:mRNA splicing, via spliceosome"/>
    <property type="evidence" value="ECO:0000318"/>
    <property type="project" value="GO_Central"/>
</dbReference>
<dbReference type="GO" id="GO:0031509">
    <property type="term" value="P:subtelomeric heterochromatin formation"/>
    <property type="evidence" value="ECO:0007669"/>
    <property type="project" value="EnsemblFungi"/>
</dbReference>
<dbReference type="GO" id="GO:0006368">
    <property type="term" value="P:transcription elongation by RNA polymerase II"/>
    <property type="evidence" value="ECO:0007669"/>
    <property type="project" value="EnsemblFungi"/>
</dbReference>
<dbReference type="GO" id="GO:0006283">
    <property type="term" value="P:transcription-coupled nucleotide-excision repair"/>
    <property type="evidence" value="ECO:0007669"/>
    <property type="project" value="EnsemblFungi"/>
</dbReference>
<dbReference type="CDD" id="cd17950">
    <property type="entry name" value="DEADc_DDX39"/>
    <property type="match status" value="1"/>
</dbReference>
<dbReference type="CDD" id="cd18787">
    <property type="entry name" value="SF2_C_DEAD"/>
    <property type="match status" value="1"/>
</dbReference>
<dbReference type="FunFam" id="3.40.50.300:FF:000809">
    <property type="entry name" value="ATP-dependent RNA helicase SUB2"/>
    <property type="match status" value="1"/>
</dbReference>
<dbReference type="FunFam" id="3.40.50.300:FF:000111">
    <property type="entry name" value="DEAD-box ATP-dependent RNA helicase"/>
    <property type="match status" value="1"/>
</dbReference>
<dbReference type="Gene3D" id="3.40.50.300">
    <property type="entry name" value="P-loop containing nucleotide triphosphate hydrolases"/>
    <property type="match status" value="2"/>
</dbReference>
<dbReference type="InterPro" id="IPR011545">
    <property type="entry name" value="DEAD/DEAH_box_helicase_dom"/>
</dbReference>
<dbReference type="InterPro" id="IPR014001">
    <property type="entry name" value="Helicase_ATP-bd"/>
</dbReference>
<dbReference type="InterPro" id="IPR001650">
    <property type="entry name" value="Helicase_C-like"/>
</dbReference>
<dbReference type="InterPro" id="IPR027417">
    <property type="entry name" value="P-loop_NTPase"/>
</dbReference>
<dbReference type="InterPro" id="IPR014014">
    <property type="entry name" value="RNA_helicase_DEAD_Q_motif"/>
</dbReference>
<dbReference type="PANTHER" id="PTHR47958">
    <property type="entry name" value="ATP-DEPENDENT RNA HELICASE DBP3"/>
    <property type="match status" value="1"/>
</dbReference>
<dbReference type="Pfam" id="PF00270">
    <property type="entry name" value="DEAD"/>
    <property type="match status" value="1"/>
</dbReference>
<dbReference type="Pfam" id="PF00271">
    <property type="entry name" value="Helicase_C"/>
    <property type="match status" value="1"/>
</dbReference>
<dbReference type="SMART" id="SM00487">
    <property type="entry name" value="DEXDc"/>
    <property type="match status" value="1"/>
</dbReference>
<dbReference type="SMART" id="SM00490">
    <property type="entry name" value="HELICc"/>
    <property type="match status" value="1"/>
</dbReference>
<dbReference type="SUPFAM" id="SSF52540">
    <property type="entry name" value="P-loop containing nucleoside triphosphate hydrolases"/>
    <property type="match status" value="1"/>
</dbReference>
<dbReference type="PROSITE" id="PS51192">
    <property type="entry name" value="HELICASE_ATP_BIND_1"/>
    <property type="match status" value="1"/>
</dbReference>
<dbReference type="PROSITE" id="PS51194">
    <property type="entry name" value="HELICASE_CTER"/>
    <property type="match status" value="1"/>
</dbReference>
<dbReference type="PROSITE" id="PS51195">
    <property type="entry name" value="Q_MOTIF"/>
    <property type="match status" value="1"/>
</dbReference>
<protein>
    <recommendedName>
        <fullName>ATP-dependent RNA helicase SUB2</fullName>
        <ecNumber>3.6.4.13</ecNumber>
    </recommendedName>
</protein>
<proteinExistence type="inferred from homology"/>
<keyword id="KW-0067">ATP-binding</keyword>
<keyword id="KW-0347">Helicase</keyword>
<keyword id="KW-0378">Hydrolase</keyword>
<keyword id="KW-0507">mRNA processing</keyword>
<keyword id="KW-0508">mRNA splicing</keyword>
<keyword id="KW-0509">mRNA transport</keyword>
<keyword id="KW-0547">Nucleotide-binding</keyword>
<keyword id="KW-0539">Nucleus</keyword>
<keyword id="KW-0694">RNA-binding</keyword>
<keyword id="KW-0747">Spliceosome</keyword>
<keyword id="KW-0813">Transport</keyword>
<feature type="chain" id="PRO_0000256032" description="ATP-dependent RNA helicase SUB2">
    <location>
        <begin position="1"/>
        <end position="438"/>
    </location>
</feature>
<feature type="domain" description="Helicase ATP-binding" evidence="2">
    <location>
        <begin position="83"/>
        <end position="260"/>
    </location>
</feature>
<feature type="domain" description="Helicase C-terminal" evidence="3">
    <location>
        <begin position="288"/>
        <end position="433"/>
    </location>
</feature>
<feature type="region of interest" description="Disordered" evidence="4">
    <location>
        <begin position="1"/>
        <end position="41"/>
    </location>
</feature>
<feature type="short sequence motif" description="Q motif">
    <location>
        <begin position="52"/>
        <end position="80"/>
    </location>
</feature>
<feature type="short sequence motif" description="DEAD box">
    <location>
        <begin position="207"/>
        <end position="210"/>
    </location>
</feature>
<feature type="compositionally biased region" description="Acidic residues" evidence="4">
    <location>
        <begin position="1"/>
        <end position="16"/>
    </location>
</feature>
<feature type="compositionally biased region" description="Low complexity" evidence="4">
    <location>
        <begin position="21"/>
        <end position="38"/>
    </location>
</feature>
<feature type="binding site" evidence="2">
    <location>
        <begin position="96"/>
        <end position="103"/>
    </location>
    <ligand>
        <name>ATP</name>
        <dbReference type="ChEBI" id="CHEBI:30616"/>
    </ligand>
</feature>
<gene>
    <name type="primary">SUB2</name>
    <name type="ORF">SNOG_15623</name>
</gene>
<name>SUB2_PHANO</name>
<reference key="1">
    <citation type="journal article" date="2007" name="Plant Cell">
        <title>Dothideomycete-plant interactions illuminated by genome sequencing and EST analysis of the wheat pathogen Stagonospora nodorum.</title>
        <authorList>
            <person name="Hane J.K."/>
            <person name="Lowe R.G.T."/>
            <person name="Solomon P.S."/>
            <person name="Tan K.-C."/>
            <person name="Schoch C.L."/>
            <person name="Spatafora J.W."/>
            <person name="Crous P.W."/>
            <person name="Kodira C.D."/>
            <person name="Birren B.W."/>
            <person name="Galagan J.E."/>
            <person name="Torriani S.F.F."/>
            <person name="McDonald B.A."/>
            <person name="Oliver R.P."/>
        </authorList>
    </citation>
    <scope>NUCLEOTIDE SEQUENCE [LARGE SCALE GENOMIC DNA]</scope>
    <source>
        <strain>SN15 / ATCC MYA-4574 / FGSC 10173</strain>
    </source>
</reference>
<comment type="function">
    <text evidence="1">ATP-binding RNA helicase involved in transcription elongation and required for the export of mRNA out of the nucleus. SUB2 also plays a role in pre-mRNA splicing and spliceosome assembly. May be involved in rDNA and telomeric silencing, and maintenance of genome integrity (By similarity).</text>
</comment>
<comment type="catalytic activity">
    <reaction>
        <text>ATP + H2O = ADP + phosphate + H(+)</text>
        <dbReference type="Rhea" id="RHEA:13065"/>
        <dbReference type="ChEBI" id="CHEBI:15377"/>
        <dbReference type="ChEBI" id="CHEBI:15378"/>
        <dbReference type="ChEBI" id="CHEBI:30616"/>
        <dbReference type="ChEBI" id="CHEBI:43474"/>
        <dbReference type="ChEBI" id="CHEBI:456216"/>
        <dbReference type="EC" id="3.6.4.13"/>
    </reaction>
</comment>
<comment type="subcellular location">
    <subcellularLocation>
        <location evidence="1">Nucleus</location>
    </subcellularLocation>
</comment>
<comment type="domain">
    <text>The Q motif is unique to and characteristic of the DEAD box family of RNA helicases and controls ATP binding and hydrolysis.</text>
</comment>
<comment type="similarity">
    <text evidence="5">Belongs to the DEAD box helicase family. DECD subfamily.</text>
</comment>